<dbReference type="EC" id="3.5.1.-"/>
<dbReference type="EMBL" id="X56185">
    <property type="protein sequence ID" value="CAA39649.1"/>
    <property type="status" value="ALT_SEQ"/>
    <property type="molecule type" value="Genomic_DNA"/>
</dbReference>
<dbReference type="SMR" id="P25016"/>
<dbReference type="UniPathway" id="UPA00151"/>
<dbReference type="GO" id="GO:0016787">
    <property type="term" value="F:hydrolase activity"/>
    <property type="evidence" value="ECO:0007669"/>
    <property type="project" value="UniProtKB-KW"/>
</dbReference>
<dbReference type="GO" id="GO:0009851">
    <property type="term" value="P:auxin biosynthetic process"/>
    <property type="evidence" value="ECO:0007669"/>
    <property type="project" value="UniProtKB-UniPathway"/>
</dbReference>
<dbReference type="Gene3D" id="3.90.1300.10">
    <property type="entry name" value="Amidase signature (AS) domain"/>
    <property type="match status" value="1"/>
</dbReference>
<dbReference type="InterPro" id="IPR000120">
    <property type="entry name" value="Amidase"/>
</dbReference>
<dbReference type="InterPro" id="IPR020556">
    <property type="entry name" value="Amidase_CS"/>
</dbReference>
<dbReference type="InterPro" id="IPR023631">
    <property type="entry name" value="Amidase_dom"/>
</dbReference>
<dbReference type="InterPro" id="IPR036928">
    <property type="entry name" value="AS_sf"/>
</dbReference>
<dbReference type="NCBIfam" id="NF005688">
    <property type="entry name" value="PRK07488.1"/>
    <property type="match status" value="1"/>
</dbReference>
<dbReference type="PANTHER" id="PTHR11895:SF151">
    <property type="entry name" value="GLUTAMYL-TRNA(GLN) AMIDOTRANSFERASE SUBUNIT A"/>
    <property type="match status" value="1"/>
</dbReference>
<dbReference type="PANTHER" id="PTHR11895">
    <property type="entry name" value="TRANSAMIDASE"/>
    <property type="match status" value="1"/>
</dbReference>
<dbReference type="Pfam" id="PF01425">
    <property type="entry name" value="Amidase"/>
    <property type="match status" value="1"/>
</dbReference>
<dbReference type="SUPFAM" id="SSF75304">
    <property type="entry name" value="Amidase signature (AS) enzymes"/>
    <property type="match status" value="1"/>
</dbReference>
<dbReference type="PROSITE" id="PS00571">
    <property type="entry name" value="AMIDASES"/>
    <property type="match status" value="1"/>
</dbReference>
<organism>
    <name type="scientific">Agrobacterium vitis</name>
    <name type="common">Rhizobium vitis</name>
    <dbReference type="NCBI Taxonomy" id="373"/>
    <lineage>
        <taxon>Bacteria</taxon>
        <taxon>Pseudomonadati</taxon>
        <taxon>Pseudomonadota</taxon>
        <taxon>Alphaproteobacteria</taxon>
        <taxon>Hyphomicrobiales</taxon>
        <taxon>Rhizobiaceae</taxon>
        <taxon>Rhizobium/Agrobacterium group</taxon>
        <taxon>Agrobacterium</taxon>
    </lineage>
</organism>
<keyword id="KW-0073">Auxin biosynthesis</keyword>
<keyword id="KW-0192">Crown gall tumor</keyword>
<keyword id="KW-0378">Hydrolase</keyword>
<keyword id="KW-0614">Plasmid</keyword>
<accession>P25016</accession>
<sequence length="467" mass="49942">MVPITSLAQTLERLRRKDYSCLELVETLIARCEAAKALNALLATDWGGLRRRAKKIDRHGNAGVGLRGIPLCFKANIATGIFPTTAATPALINHLPKIPSRIAERLFSAGALPGASGNMHELSFGITSNNYATGAVRNPWNPSLIPGGSSGGVAAAVASRLMLGGIGTDTGASVRLPAALCGVVGFRPTLGRYPRDRIIPVSPTRDTAGIIAQCVADVVILDQVISGRPARILPIPLKGLRIGLPTTYFYDDLDADVAFAAETTIRLLANRGVTFVEADIPHLEDLNSGASLPIALYEFPHALKQYLDDFVGTVSFSDVIKEIRSPDVANIVNAQIDGHQISNAEYELARQSFRPRLQAAYRNYFRLYRLDAILFPTAPLAAKAIGQDSSVIHNGSMVNTFKIYVRNVDPSSNAGLPGLSLPVGLTPDRLPVGMEIDGLAGSDHRLLAIGAALEKAINFRSFPDVLN</sequence>
<gene>
    <name type="primary">TA-iaaH</name>
</gene>
<proteinExistence type="inferred from homology"/>
<comment type="function">
    <text>Hydrolyzes indole-3-acetamide (IAM) into indole-3-acetic acid (IAA).</text>
</comment>
<comment type="pathway">
    <text>Plant hormone metabolism; auxin biosynthesis.</text>
</comment>
<comment type="similarity">
    <text evidence="2">Belongs to the amidase family.</text>
</comment>
<comment type="caution">
    <text evidence="2">The plasmid pTiTM4 carries two T-regions, the TA and TB region, both of which have an IaaH gene, with low homology between them. Only the TB-IaaH gene seems to be functional.</text>
</comment>
<geneLocation type="plasmid">
    <name>pTiTM4</name>
</geneLocation>
<name>HYIN2_AGRVI</name>
<reference key="1">
    <citation type="journal article" date="1991" name="Plant Mol. Biol.">
        <title>Sequence of Agrobacterium tumefaciens biotype III auxin genes.</title>
        <authorList>
            <person name="Bonnard G."/>
            <person name="Vincent F."/>
            <person name="Otten L."/>
        </authorList>
    </citation>
    <scope>NUCLEOTIDE SEQUENCE [GENOMIC DNA]</scope>
    <source>
        <strain>TM4</strain>
    </source>
</reference>
<evidence type="ECO:0000250" key="1"/>
<evidence type="ECO:0000305" key="2"/>
<feature type="chain" id="PRO_0000105245" description="Indoleacetamide hydrolase">
    <location>
        <begin position="1"/>
        <end position="467"/>
    </location>
</feature>
<feature type="active site" description="Charge relay system" evidence="1">
    <location>
        <position position="74"/>
    </location>
</feature>
<feature type="active site" description="Charge relay system" evidence="1">
    <location>
        <position position="149"/>
    </location>
</feature>
<feature type="active site" description="Acyl-ester intermediate" evidence="1">
    <location>
        <position position="173"/>
    </location>
</feature>
<protein>
    <recommendedName>
        <fullName>Indoleacetamide hydrolase</fullName>
        <shortName>IAH</shortName>
        <ecNumber>3.5.1.-</ecNumber>
    </recommendedName>
    <alternativeName>
        <fullName>Indole-3-acetamide hydrolase</fullName>
    </alternativeName>
</protein>